<proteinExistence type="evidence at transcript level"/>
<comment type="function">
    <text evidence="1">Regulates ATP-dependent protein translocation into the mitochondrial matrix.</text>
</comment>
<comment type="subunit">
    <text evidence="1">Probable component of the PAM complex at least composed of a mitochondrial HSP70 protein, GRPE, TIMM44, TIMM16/PAM16 and TIMM14. Associates with the TIM23 complex.</text>
</comment>
<comment type="subcellular location">
    <subcellularLocation>
        <location evidence="1">Mitochondrion inner membrane</location>
        <topology evidence="1">Peripheral membrane protein</topology>
        <orientation evidence="1">Matrix side</orientation>
    </subcellularLocation>
</comment>
<comment type="domain">
    <text evidence="1">The J-like region, although related to the J domain does not have co-chaperone activity.</text>
</comment>
<comment type="similarity">
    <text evidence="3">Belongs to the TIM16/PAM16 family.</text>
</comment>
<sequence>MAKYLAQIMVMGMQVVGRAFTRALRQEFAASRAAAEARGRAGTESAAVSSLSGISLQEAQQILNVSKLTPEEIQKNYEHLFKVNDKEVGGSFYLQSKVVRAKERLDQEMDIQSKTEKPKDETTQT</sequence>
<name>TIM16_XENTR</name>
<organism>
    <name type="scientific">Xenopus tropicalis</name>
    <name type="common">Western clawed frog</name>
    <name type="synonym">Silurana tropicalis</name>
    <dbReference type="NCBI Taxonomy" id="8364"/>
    <lineage>
        <taxon>Eukaryota</taxon>
        <taxon>Metazoa</taxon>
        <taxon>Chordata</taxon>
        <taxon>Craniata</taxon>
        <taxon>Vertebrata</taxon>
        <taxon>Euteleostomi</taxon>
        <taxon>Amphibia</taxon>
        <taxon>Batrachia</taxon>
        <taxon>Anura</taxon>
        <taxon>Pipoidea</taxon>
        <taxon>Pipidae</taxon>
        <taxon>Xenopodinae</taxon>
        <taxon>Xenopus</taxon>
        <taxon>Silurana</taxon>
    </lineage>
</organism>
<protein>
    <recommendedName>
        <fullName>Mitochondrial import inner membrane translocase subunit tim16</fullName>
    </recommendedName>
    <alternativeName>
        <fullName>Presequence translocated-associated motor subunit pam16</fullName>
    </alternativeName>
</protein>
<dbReference type="EMBL" id="CR761515">
    <property type="protein sequence ID" value="CAJ83958.1"/>
    <property type="molecule type" value="mRNA"/>
</dbReference>
<dbReference type="EMBL" id="BC084449">
    <property type="protein sequence ID" value="AAH84449.1"/>
    <property type="molecule type" value="mRNA"/>
</dbReference>
<dbReference type="RefSeq" id="NP_001004771.1">
    <property type="nucleotide sequence ID" value="NM_001004771.2"/>
</dbReference>
<dbReference type="SMR" id="Q5XGJ0"/>
<dbReference type="FunCoup" id="Q5XGJ0">
    <property type="interactions" value="930"/>
</dbReference>
<dbReference type="PaxDb" id="8364-ENSXETP00000037687"/>
<dbReference type="DNASU" id="447952"/>
<dbReference type="GeneID" id="447952"/>
<dbReference type="KEGG" id="xtr:447952"/>
<dbReference type="AGR" id="Xenbase:XB-GENE-6454649"/>
<dbReference type="CTD" id="51025"/>
<dbReference type="Xenbase" id="XB-GENE-6454649">
    <property type="gene designation" value="pam16"/>
</dbReference>
<dbReference type="InParanoid" id="Q5XGJ0"/>
<dbReference type="OMA" id="AKYLIQI"/>
<dbReference type="OrthoDB" id="10262892at2759"/>
<dbReference type="Proteomes" id="UP000008143">
    <property type="component" value="Chromosome 9"/>
</dbReference>
<dbReference type="GO" id="GO:0005744">
    <property type="term" value="C:TIM23 mitochondrial import inner membrane translocase complex"/>
    <property type="evidence" value="ECO:0007669"/>
    <property type="project" value="InterPro"/>
</dbReference>
<dbReference type="GO" id="GO:0030150">
    <property type="term" value="P:protein import into mitochondrial matrix"/>
    <property type="evidence" value="ECO:0007669"/>
    <property type="project" value="InterPro"/>
</dbReference>
<dbReference type="FunFam" id="1.10.287.110:FF:000006">
    <property type="entry name" value="Import inner membrane translocase subunit TIM16"/>
    <property type="match status" value="1"/>
</dbReference>
<dbReference type="Gene3D" id="1.10.287.110">
    <property type="entry name" value="DnaJ domain"/>
    <property type="match status" value="1"/>
</dbReference>
<dbReference type="InterPro" id="IPR036869">
    <property type="entry name" value="J_dom_sf"/>
</dbReference>
<dbReference type="InterPro" id="IPR005341">
    <property type="entry name" value="Tim16"/>
</dbReference>
<dbReference type="PANTHER" id="PTHR12388">
    <property type="entry name" value="MITOCHONDRIA ASSOCIATED GRANULOCYTE MACROPHAGE CSF SIGNALING MOLECULE"/>
    <property type="match status" value="1"/>
</dbReference>
<dbReference type="PANTHER" id="PTHR12388:SF0">
    <property type="entry name" value="MITOCHONDRIAL IMPORT INNER MEMBRANE TRANSLOCASE SUBUNIT TIM16"/>
    <property type="match status" value="1"/>
</dbReference>
<dbReference type="Pfam" id="PF03656">
    <property type="entry name" value="Pam16"/>
    <property type="match status" value="1"/>
</dbReference>
<evidence type="ECO:0000250" key="1"/>
<evidence type="ECO:0000256" key="2">
    <source>
        <dbReference type="SAM" id="MobiDB-lite"/>
    </source>
</evidence>
<evidence type="ECO:0000305" key="3"/>
<accession>Q5XGJ0</accession>
<accession>Q28G77</accession>
<feature type="chain" id="PRO_0000214084" description="Mitochondrial import inner membrane translocase subunit tim16">
    <location>
        <begin position="1"/>
        <end position="125"/>
    </location>
</feature>
<feature type="region of interest" description="J-like">
    <location>
        <begin position="58"/>
        <end position="110"/>
    </location>
</feature>
<feature type="region of interest" description="Disordered" evidence="2">
    <location>
        <begin position="105"/>
        <end position="125"/>
    </location>
</feature>
<reference key="1">
    <citation type="submission" date="2006-03" db="EMBL/GenBank/DDBJ databases">
        <authorList>
            <consortium name="Sanger Xenopus tropicalis EST/cDNA project"/>
        </authorList>
    </citation>
    <scope>NUCLEOTIDE SEQUENCE [LARGE SCALE MRNA]</scope>
    <source>
        <tissue>Gastrula</tissue>
    </source>
</reference>
<reference key="2">
    <citation type="submission" date="2004-10" db="EMBL/GenBank/DDBJ databases">
        <authorList>
            <consortium name="NIH - Xenopus Gene Collection (XGC) project"/>
        </authorList>
    </citation>
    <scope>NUCLEOTIDE SEQUENCE [LARGE SCALE MRNA]</scope>
</reference>
<gene>
    <name type="primary">pam16</name>
    <name type="synonym">tim16</name>
    <name type="synonym">timm16</name>
    <name type="ORF">TGas144p19.1</name>
</gene>
<keyword id="KW-0472">Membrane</keyword>
<keyword id="KW-0496">Mitochondrion</keyword>
<keyword id="KW-0999">Mitochondrion inner membrane</keyword>
<keyword id="KW-0653">Protein transport</keyword>
<keyword id="KW-1185">Reference proteome</keyword>
<keyword id="KW-0811">Translocation</keyword>
<keyword id="KW-0813">Transport</keyword>